<protein>
    <recommendedName>
        <fullName>Uncharacterized protein ORF134</fullName>
    </recommendedName>
</protein>
<accession>Q3V4U5</accession>
<evidence type="ECO:0000255" key="1"/>
<evidence type="ECO:0000305" key="2"/>
<reference key="1">
    <citation type="journal article" date="2005" name="Nature">
        <title>Virology: independent virus development outside a host.</title>
        <authorList>
            <person name="Haring M."/>
            <person name="Vestergaard G."/>
            <person name="Rachel R."/>
            <person name="Chen L."/>
            <person name="Garrett R.A."/>
            <person name="Prangishvili D."/>
        </authorList>
    </citation>
    <scope>NUCLEOTIDE SEQUENCE [GENOMIC DNA]</scope>
</reference>
<proteinExistence type="predicted"/>
<sequence>MAQVENVSLSQIIANPYLPPFSTTLFEIVIFTFIMITLYLIFRGSGLVRRRLVLLLIAIYVIVLQLFFTPYEYTTARLLPNGTVDYVVYTSQANIVMALDVLAGLMLILAVVYIILDYLRGFGKGDEEEGVIDL</sequence>
<feature type="chain" id="PRO_0000389043" description="Uncharacterized protein ORF134">
    <location>
        <begin position="1"/>
        <end position="134"/>
    </location>
</feature>
<feature type="transmembrane region" description="Helical" evidence="1">
    <location>
        <begin position="21"/>
        <end position="41"/>
    </location>
</feature>
<feature type="transmembrane region" description="Helical" evidence="1">
    <location>
        <begin position="52"/>
        <end position="72"/>
    </location>
</feature>
<feature type="transmembrane region" description="Helical" evidence="1">
    <location>
        <begin position="95"/>
        <end position="115"/>
    </location>
</feature>
<dbReference type="EMBL" id="AJ888457">
    <property type="protein sequence ID" value="CAI59869.1"/>
    <property type="molecule type" value="Genomic_DNA"/>
</dbReference>
<dbReference type="RefSeq" id="YP_319882.1">
    <property type="nucleotide sequence ID" value="NC_007409.1"/>
</dbReference>
<dbReference type="SMR" id="Q3V4U5"/>
<dbReference type="GeneID" id="4484244"/>
<dbReference type="KEGG" id="vg:4484244"/>
<dbReference type="Proteomes" id="UP000002150">
    <property type="component" value="Genome"/>
</dbReference>
<dbReference type="GO" id="GO:0033644">
    <property type="term" value="C:host cell membrane"/>
    <property type="evidence" value="ECO:0007669"/>
    <property type="project" value="UniProtKB-SubCell"/>
</dbReference>
<dbReference type="GO" id="GO:0016020">
    <property type="term" value="C:membrane"/>
    <property type="evidence" value="ECO:0007669"/>
    <property type="project" value="UniProtKB-KW"/>
</dbReference>
<name>Y134_ATV</name>
<keyword id="KW-1043">Host membrane</keyword>
<keyword id="KW-0472">Membrane</keyword>
<keyword id="KW-1185">Reference proteome</keyword>
<keyword id="KW-0812">Transmembrane</keyword>
<keyword id="KW-1133">Transmembrane helix</keyword>
<organism>
    <name type="scientific">Acidianus two-tailed virus</name>
    <name type="common">ATV</name>
    <dbReference type="NCBI Taxonomy" id="315953"/>
    <lineage>
        <taxon>Viruses</taxon>
        <taxon>Viruses incertae sedis</taxon>
        <taxon>Bicaudaviridae</taxon>
        <taxon>Bicaudavirus</taxon>
    </lineage>
</organism>
<organismHost>
    <name type="scientific">Acidianus convivator</name>
    <dbReference type="NCBI Taxonomy" id="269667"/>
</organismHost>
<comment type="subcellular location">
    <subcellularLocation>
        <location evidence="2">Host membrane</location>
        <topology evidence="2">Multi-pass membrane protein</topology>
    </subcellularLocation>
</comment>